<accession>A5ECH2</accession>
<name>RL36_BRASB</name>
<sequence length="41" mass="4990">MKVRNSLKSLRGRHRANRLVRRKGRVYVINKVQRRFKARQG</sequence>
<comment type="similarity">
    <text evidence="1">Belongs to the bacterial ribosomal protein bL36 family.</text>
</comment>
<dbReference type="EMBL" id="CP000494">
    <property type="protein sequence ID" value="ABQ33866.1"/>
    <property type="molecule type" value="Genomic_DNA"/>
</dbReference>
<dbReference type="SMR" id="A5ECH2"/>
<dbReference type="STRING" id="288000.BBta_1656"/>
<dbReference type="KEGG" id="bbt:BBta_1656"/>
<dbReference type="eggNOG" id="COG0257">
    <property type="taxonomic scope" value="Bacteria"/>
</dbReference>
<dbReference type="HOGENOM" id="CLU_135723_3_0_5"/>
<dbReference type="OrthoDB" id="9801558at2"/>
<dbReference type="Proteomes" id="UP000000246">
    <property type="component" value="Chromosome"/>
</dbReference>
<dbReference type="GO" id="GO:1990904">
    <property type="term" value="C:ribonucleoprotein complex"/>
    <property type="evidence" value="ECO:0007669"/>
    <property type="project" value="UniProtKB-KW"/>
</dbReference>
<dbReference type="GO" id="GO:0005840">
    <property type="term" value="C:ribosome"/>
    <property type="evidence" value="ECO:0007669"/>
    <property type="project" value="UniProtKB-KW"/>
</dbReference>
<dbReference type="GO" id="GO:0003735">
    <property type="term" value="F:structural constituent of ribosome"/>
    <property type="evidence" value="ECO:0007669"/>
    <property type="project" value="InterPro"/>
</dbReference>
<dbReference type="GO" id="GO:0006412">
    <property type="term" value="P:translation"/>
    <property type="evidence" value="ECO:0007669"/>
    <property type="project" value="UniProtKB-UniRule"/>
</dbReference>
<dbReference type="HAMAP" id="MF_00251">
    <property type="entry name" value="Ribosomal_bL36"/>
    <property type="match status" value="1"/>
</dbReference>
<dbReference type="InterPro" id="IPR000473">
    <property type="entry name" value="Ribosomal_bL36"/>
</dbReference>
<dbReference type="InterPro" id="IPR035977">
    <property type="entry name" value="Ribosomal_bL36_sp"/>
</dbReference>
<dbReference type="InterPro" id="IPR047621">
    <property type="entry name" value="Ribosomal_L36_bact"/>
</dbReference>
<dbReference type="NCBIfam" id="NF002021">
    <property type="entry name" value="PRK00831.1"/>
    <property type="match status" value="1"/>
</dbReference>
<dbReference type="PANTHER" id="PTHR47781">
    <property type="entry name" value="50S RIBOSOMAL PROTEIN L36 2"/>
    <property type="match status" value="1"/>
</dbReference>
<dbReference type="PANTHER" id="PTHR47781:SF1">
    <property type="entry name" value="LARGE RIBOSOMAL SUBUNIT PROTEIN BL36B"/>
    <property type="match status" value="1"/>
</dbReference>
<dbReference type="Pfam" id="PF00444">
    <property type="entry name" value="Ribosomal_L36"/>
    <property type="match status" value="1"/>
</dbReference>
<dbReference type="SUPFAM" id="SSF57840">
    <property type="entry name" value="Ribosomal protein L36"/>
    <property type="match status" value="1"/>
</dbReference>
<dbReference type="PROSITE" id="PS00828">
    <property type="entry name" value="RIBOSOMAL_L36"/>
    <property type="match status" value="1"/>
</dbReference>
<organism>
    <name type="scientific">Bradyrhizobium sp. (strain BTAi1 / ATCC BAA-1182)</name>
    <dbReference type="NCBI Taxonomy" id="288000"/>
    <lineage>
        <taxon>Bacteria</taxon>
        <taxon>Pseudomonadati</taxon>
        <taxon>Pseudomonadota</taxon>
        <taxon>Alphaproteobacteria</taxon>
        <taxon>Hyphomicrobiales</taxon>
        <taxon>Nitrobacteraceae</taxon>
        <taxon>Bradyrhizobium</taxon>
    </lineage>
</organism>
<feature type="chain" id="PRO_0000302164" description="Large ribosomal subunit protein bL36">
    <location>
        <begin position="1"/>
        <end position="41"/>
    </location>
</feature>
<keyword id="KW-1185">Reference proteome</keyword>
<keyword id="KW-0687">Ribonucleoprotein</keyword>
<keyword id="KW-0689">Ribosomal protein</keyword>
<protein>
    <recommendedName>
        <fullName evidence="1">Large ribosomal subunit protein bL36</fullName>
    </recommendedName>
    <alternativeName>
        <fullName evidence="2">50S ribosomal protein L36</fullName>
    </alternativeName>
</protein>
<proteinExistence type="inferred from homology"/>
<evidence type="ECO:0000255" key="1">
    <source>
        <dbReference type="HAMAP-Rule" id="MF_00251"/>
    </source>
</evidence>
<evidence type="ECO:0000305" key="2"/>
<gene>
    <name evidence="1" type="primary">rpmJ</name>
    <name type="ordered locus">BBta_1656</name>
</gene>
<reference key="1">
    <citation type="journal article" date="2007" name="Science">
        <title>Legumes symbioses: absence of nod genes in photosynthetic bradyrhizobia.</title>
        <authorList>
            <person name="Giraud E."/>
            <person name="Moulin L."/>
            <person name="Vallenet D."/>
            <person name="Barbe V."/>
            <person name="Cytryn E."/>
            <person name="Avarre J.-C."/>
            <person name="Jaubert M."/>
            <person name="Simon D."/>
            <person name="Cartieaux F."/>
            <person name="Prin Y."/>
            <person name="Bena G."/>
            <person name="Hannibal L."/>
            <person name="Fardoux J."/>
            <person name="Kojadinovic M."/>
            <person name="Vuillet L."/>
            <person name="Lajus A."/>
            <person name="Cruveiller S."/>
            <person name="Rouy Z."/>
            <person name="Mangenot S."/>
            <person name="Segurens B."/>
            <person name="Dossat C."/>
            <person name="Franck W.L."/>
            <person name="Chang W.-S."/>
            <person name="Saunders E."/>
            <person name="Bruce D."/>
            <person name="Richardson P."/>
            <person name="Normand P."/>
            <person name="Dreyfus B."/>
            <person name="Pignol D."/>
            <person name="Stacey G."/>
            <person name="Emerich D."/>
            <person name="Vermeglio A."/>
            <person name="Medigue C."/>
            <person name="Sadowsky M."/>
        </authorList>
    </citation>
    <scope>NUCLEOTIDE SEQUENCE [LARGE SCALE GENOMIC DNA]</scope>
    <source>
        <strain>BTAi1 / ATCC BAA-1182</strain>
    </source>
</reference>